<evidence type="ECO:0000250" key="1"/>
<evidence type="ECO:0000255" key="2"/>
<evidence type="ECO:0000255" key="3">
    <source>
        <dbReference type="PROSITE-ProRule" id="PRU00539"/>
    </source>
</evidence>
<evidence type="ECO:0000255" key="4">
    <source>
        <dbReference type="PROSITE-ProRule" id="PRU01216"/>
    </source>
</evidence>
<evidence type="ECO:0000256" key="5">
    <source>
        <dbReference type="SAM" id="MobiDB-lite"/>
    </source>
</evidence>
<evidence type="ECO:0000305" key="6"/>
<sequence>MNRFTAYAALFFMFSLCSTAKEAGFLHPAFNFRGTSTMSASSGDYSAAPTPLYKSWALPSSLNLTTQPPPPLTDRSYYELVQALTSKMRLDCQTVGDMTWRHLSEMLFASWNSVKEVSLKAASVTLWAIINIWFGLYWTLARLITLFLWTFSIEALCLILLGCITSLIYKGALSLSEHLPVFLFMSPLKIIWRAAFSKRNYKNERAVEGYKGFSVPQKPPKSAVIELQHENGSHLGYANCIRLYSGENALVTAEHCLEGAFATSLKTGNRIPMSTFFPIFKSARNDISILVGPPNWEGLLSVKGAHFITADKIGKGPASFYTLEKGEWMCHSATIDGAHHQFVSVLCNTGPGYSGTGFWSSKNLLGVLKGFPLEEECNYNVMSVIPSIPGITSPNYVFESTAVKGRVFSDEAVKELEREASEAVKKLARFKSLTDKNWADDYDSDEDYGLEREAATNAPAEKTAQTNSAEKTAPSTSAEKTALTNKPFKWASGTVRQNKRQLRHPRRRYKRTTNGQNGRTDHHSYGGENQSLGDRGEDSEQGVSESPAEAQTKEARKAWREEQAKQFTSYFNAIYKWGAQEGGCPPGFRKCGHIPRYYHPRTRGETQWGQKLCQVHPELADKTAGFGWPKAGSEAELQSLNLQAARWLQRAESATIPGAEARKRVIEKTVEAYRNCVTNAPLCSLKSKLDWAGFQQDIREAVQSLELDAGVGIPYIAYGLPAHRGWVEDHKLLPVLTQLTFDRLQKMSEASFEDMSAEELVQEGLCDPIRLFVKGEPHKQSKLDEGRYRLIMSVSLVDQLVARVLFQNQNKREISLWRSVPSKPGFGLSTDTQTAEFLECLQKVSGAPSVEELCANHKEYTRPTDCSGFDWSVAYWMLEDDMEVRNRLTFNNTQLTKRLRAAWLKCIGNSVLCLSDGTLLAQTVPGVQKSGSYNTSSSNSRIRVMAAYHCGADWAMAMGDDALEAPNSDLEEYKTLGFKVEVGRELEFCSHIFRNPTLAVPVNTNKMLYKLIHGYNPECGNPEVIQNYLAAVFSVLQELRHDRELVAKLHQWLVPSATTKEH</sequence>
<comment type="function">
    <text evidence="6">Precursor from which the RNA-dependent RNA polymerase (RdRp) is probably released. RNA-dependent RNA polymerase plays an essential role in virus replication (Potential).</text>
</comment>
<comment type="catalytic activity">
    <reaction evidence="3">
        <text>RNA(n) + a ribonucleoside 5'-triphosphate = RNA(n+1) + diphosphate</text>
        <dbReference type="Rhea" id="RHEA:21248"/>
        <dbReference type="Rhea" id="RHEA-COMP:14527"/>
        <dbReference type="Rhea" id="RHEA-COMP:17342"/>
        <dbReference type="ChEBI" id="CHEBI:33019"/>
        <dbReference type="ChEBI" id="CHEBI:61557"/>
        <dbReference type="ChEBI" id="CHEBI:140395"/>
        <dbReference type="EC" id="2.7.7.48"/>
    </reaction>
</comment>
<comment type="subcellular location">
    <molecule>Protein P1-P2</molecule>
    <subcellularLocation>
        <location evidence="6">Membrane</location>
        <topology evidence="6">Multi-pass membrane protein</topology>
    </subcellularLocation>
</comment>
<comment type="alternative products">
    <event type="ribosomal frameshifting"/>
    <isoform>
        <id>P17520-1</id>
        <name>RNA-directed RNA polymerase</name>
        <sequence type="displayed"/>
    </isoform>
    <isoform>
        <id>P17519-1</id>
        <name>Protein P1</name>
        <sequence type="external"/>
    </isoform>
    <text evidence="6">The isoform P1 is produced by conventional translation, whereas the isoform RNA-directed RNA polymerase is produced by -1 ribosomal frameshifting between codons 487 and 488.</text>
</comment>
<comment type="PTM">
    <text evidence="6">Specific enzymatic cleavages in vivo yield mature proteins. The protease probably cleaves itself and releases the RdRp (Potential). Cleavages have been shown in the P1 protein, but since the N-terminus containing the serine protease is shared between P1 and P1-P2, cleavages should also occur within the P1-P2 protein.</text>
</comment>
<comment type="sequence caution" evidence="6">
    <conflict type="miscellaneous discrepancy">
        <sequence resource="EMBL-CDS" id="BAA00418"/>
    </conflict>
    <text>Ribosomal frameshifting not described. Translation N-terminally extended.</text>
</comment>
<keyword id="KW-0378">Hydrolase</keyword>
<keyword id="KW-0472">Membrane</keyword>
<keyword id="KW-0511">Multifunctional enzyme</keyword>
<keyword id="KW-0547">Nucleotide-binding</keyword>
<keyword id="KW-0548">Nucleotidyltransferase</keyword>
<keyword id="KW-0645">Protease</keyword>
<keyword id="KW-1185">Reference proteome</keyword>
<keyword id="KW-0688">Ribosomal frameshifting</keyword>
<keyword id="KW-0696">RNA-directed RNA polymerase</keyword>
<keyword id="KW-0720">Serine protease</keyword>
<keyword id="KW-0732">Signal</keyword>
<keyword id="KW-0808">Transferase</keyword>
<keyword id="KW-0812">Transmembrane</keyword>
<keyword id="KW-1133">Transmembrane helix</keyword>
<keyword id="KW-0693">Viral RNA replication</keyword>
<gene>
    <name type="ORF">ORF1/ORF2</name>
</gene>
<organism>
    <name type="scientific">Potato leafroll virus (strain Potato/Scotland/strain 1/1984)</name>
    <name type="common">PLrV</name>
    <dbReference type="NCBI Taxonomy" id="12046"/>
    <lineage>
        <taxon>Viruses</taxon>
        <taxon>Riboviria</taxon>
        <taxon>Orthornavirae</taxon>
        <taxon>Pisuviricota</taxon>
        <taxon>Pisoniviricetes</taxon>
        <taxon>Sobelivirales</taxon>
        <taxon>Solemoviridae</taxon>
        <taxon>Polerovirus</taxon>
        <taxon>Potato leafroll virus</taxon>
    </lineage>
</organism>
<name>RDRP_PLRV1</name>
<dbReference type="EC" id="3.4.21.-"/>
<dbReference type="EC" id="2.7.7.48"/>
<dbReference type="EMBL" id="D00530">
    <property type="protein sequence ID" value="BAA00418.1"/>
    <property type="status" value="ALT_SEQ"/>
    <property type="molecule type" value="Genomic_RNA"/>
</dbReference>
<dbReference type="PIR" id="JA0119">
    <property type="entry name" value="RRVQLL"/>
</dbReference>
<dbReference type="Proteomes" id="UP000006723">
    <property type="component" value="Segment"/>
</dbReference>
<dbReference type="GO" id="GO:0016020">
    <property type="term" value="C:membrane"/>
    <property type="evidence" value="ECO:0007669"/>
    <property type="project" value="UniProtKB-SubCell"/>
</dbReference>
<dbReference type="GO" id="GO:0000166">
    <property type="term" value="F:nucleotide binding"/>
    <property type="evidence" value="ECO:0007669"/>
    <property type="project" value="UniProtKB-KW"/>
</dbReference>
<dbReference type="GO" id="GO:0003723">
    <property type="term" value="F:RNA binding"/>
    <property type="evidence" value="ECO:0007669"/>
    <property type="project" value="InterPro"/>
</dbReference>
<dbReference type="GO" id="GO:0003968">
    <property type="term" value="F:RNA-directed RNA polymerase activity"/>
    <property type="evidence" value="ECO:0007669"/>
    <property type="project" value="UniProtKB-KW"/>
</dbReference>
<dbReference type="GO" id="GO:0004252">
    <property type="term" value="F:serine-type endopeptidase activity"/>
    <property type="evidence" value="ECO:0007669"/>
    <property type="project" value="InterPro"/>
</dbReference>
<dbReference type="GO" id="GO:0070008">
    <property type="term" value="F:serine-type exopeptidase activity"/>
    <property type="evidence" value="ECO:0007669"/>
    <property type="project" value="InterPro"/>
</dbReference>
<dbReference type="GO" id="GO:0006351">
    <property type="term" value="P:DNA-templated transcription"/>
    <property type="evidence" value="ECO:0007669"/>
    <property type="project" value="InterPro"/>
</dbReference>
<dbReference type="GO" id="GO:0006508">
    <property type="term" value="P:proteolysis"/>
    <property type="evidence" value="ECO:0007669"/>
    <property type="project" value="UniProtKB-KW"/>
</dbReference>
<dbReference type="GO" id="GO:0039694">
    <property type="term" value="P:viral RNA genome replication"/>
    <property type="evidence" value="ECO:0007669"/>
    <property type="project" value="InterPro"/>
</dbReference>
<dbReference type="GO" id="GO:0075523">
    <property type="term" value="P:viral translational frameshifting"/>
    <property type="evidence" value="ECO:0007669"/>
    <property type="project" value="UniProtKB-KW"/>
</dbReference>
<dbReference type="CDD" id="cd23180">
    <property type="entry name" value="ps-ssRNAv_Solemoviridae_RdRp"/>
    <property type="match status" value="1"/>
</dbReference>
<dbReference type="InterPro" id="IPR043502">
    <property type="entry name" value="DNA/RNA_pol_sf"/>
</dbReference>
<dbReference type="InterPro" id="IPR018019">
    <property type="entry name" value="Luteovirus_Orf2"/>
</dbReference>
<dbReference type="InterPro" id="IPR009003">
    <property type="entry name" value="Peptidase_S1_PA"/>
</dbReference>
<dbReference type="InterPro" id="IPR000382">
    <property type="entry name" value="Peptidase_S39B_luteovirus"/>
</dbReference>
<dbReference type="InterPro" id="IPR001795">
    <property type="entry name" value="RNA-dir_pol_luteovirus"/>
</dbReference>
<dbReference type="InterPro" id="IPR007094">
    <property type="entry name" value="RNA-dir_pol_PSvirus"/>
</dbReference>
<dbReference type="Pfam" id="PF02122">
    <property type="entry name" value="Peptidase_S39"/>
    <property type="match status" value="1"/>
</dbReference>
<dbReference type="Pfam" id="PF02123">
    <property type="entry name" value="RdRP_4"/>
    <property type="match status" value="1"/>
</dbReference>
<dbReference type="PRINTS" id="PR00913">
    <property type="entry name" value="LVIRUSORF2"/>
</dbReference>
<dbReference type="SUPFAM" id="SSF56672">
    <property type="entry name" value="DNA/RNA polymerases"/>
    <property type="match status" value="1"/>
</dbReference>
<dbReference type="SUPFAM" id="SSF50494">
    <property type="entry name" value="Trypsin-like serine proteases"/>
    <property type="match status" value="1"/>
</dbReference>
<dbReference type="PROSITE" id="PS51868">
    <property type="entry name" value="PEPTIDASE_S39"/>
    <property type="match status" value="1"/>
</dbReference>
<dbReference type="PROSITE" id="PS50507">
    <property type="entry name" value="RDRP_SSRNA_POS"/>
    <property type="match status" value="1"/>
</dbReference>
<feature type="signal peptide" evidence="2">
    <location>
        <begin position="1"/>
        <end position="20"/>
    </location>
</feature>
<feature type="chain" id="PRO_0000222399" description="Protein P1-P2">
    <location>
        <begin position="21"/>
        <end position="1062"/>
    </location>
</feature>
<feature type="chain" id="PRO_0000390905" description="Serine protease" evidence="2">
    <location>
        <begin position="205"/>
        <end position="399"/>
    </location>
</feature>
<feature type="chain" id="PRO_0000390906" description="RNA-directed RNA polymerase" evidence="2">
    <location>
        <begin position="400"/>
        <end position="1062"/>
    </location>
</feature>
<feature type="transmembrane region" description="Helical" evidence="2">
    <location>
        <begin position="121"/>
        <end position="141"/>
    </location>
</feature>
<feature type="transmembrane region" description="Helical" evidence="2">
    <location>
        <begin position="144"/>
        <end position="164"/>
    </location>
</feature>
<feature type="transmembrane region" description="Helical" evidence="2">
    <location>
        <begin position="172"/>
        <end position="192"/>
    </location>
</feature>
<feature type="domain" description="Peptidase S39" evidence="4">
    <location>
        <begin position="207"/>
        <end position="399"/>
    </location>
</feature>
<feature type="domain" description="RdRp catalytic" evidence="3">
    <location>
        <begin position="859"/>
        <end position="974"/>
    </location>
</feature>
<feature type="region of interest" description="Disordered" evidence="5">
    <location>
        <begin position="455"/>
        <end position="560"/>
    </location>
</feature>
<feature type="compositionally biased region" description="Polar residues" evidence="5">
    <location>
        <begin position="463"/>
        <end position="484"/>
    </location>
</feature>
<feature type="compositionally biased region" description="Basic residues" evidence="5">
    <location>
        <begin position="497"/>
        <end position="511"/>
    </location>
</feature>
<feature type="compositionally biased region" description="Basic and acidic residues" evidence="5">
    <location>
        <begin position="551"/>
        <end position="560"/>
    </location>
</feature>
<feature type="active site" description="For protease activity" evidence="4">
    <location>
        <position position="255"/>
    </location>
</feature>
<feature type="active site" description="For protease activity" evidence="4">
    <location>
        <position position="286"/>
    </location>
</feature>
<feature type="active site" description="For protease activity" evidence="4">
    <location>
        <position position="354"/>
    </location>
</feature>
<feature type="site" description="Cleavage; by viral serine protease" evidence="2">
    <location>
        <begin position="204"/>
        <end position="205"/>
    </location>
</feature>
<feature type="site" description="Cleavage; by viral serine protease" evidence="1">
    <location>
        <begin position="399"/>
        <end position="400"/>
    </location>
</feature>
<protein>
    <recommendedName>
        <fullName>Protein P1-P2</fullName>
    </recommendedName>
    <component>
        <recommendedName>
            <fullName>Serine protease</fullName>
            <ecNumber>3.4.21.-</ecNumber>
        </recommendedName>
    </component>
    <component>
        <recommendedName>
            <fullName>RNA-directed RNA polymerase</fullName>
            <ecNumber>2.7.7.48</ecNumber>
        </recommendedName>
        <alternativeName>
            <fullName>69.6 kDa protein</fullName>
        </alternativeName>
    </component>
</protein>
<accession>P17520</accession>
<reference key="1">
    <citation type="journal article" date="1989" name="J. Gen. Virol.">
        <title>Nucleotide sequence of potato leafroll luteovirus RNA.</title>
        <authorList>
            <person name="Mayo M.A."/>
            <person name="Robinson D.J."/>
            <person name="Jolly C.A."/>
            <person name="Hyman L."/>
        </authorList>
    </citation>
    <scope>NUCLEOTIDE SEQUENCE [GENOMIC RNA]</scope>
</reference>
<reference key="2">
    <citation type="journal article" date="1992" name="EMBO J.">
        <title>Ribosomal frameshifting in plants: a novel signal directs the -1 frameshift in the synthesis of the putative viral replicase of potato leafroll luteovirus.</title>
        <authorList>
            <person name="Prufer D."/>
            <person name="Tacke E."/>
            <person name="Schmitz J."/>
            <person name="Kull B."/>
            <person name="Kaufmann A."/>
            <person name="Rohde W."/>
        </authorList>
    </citation>
    <scope>RIBOSOMAL FRAMESHIFTING</scope>
</reference>
<organismHost>
    <name type="scientific">Solanum tuberosum</name>
    <name type="common">Potato</name>
    <dbReference type="NCBI Taxonomy" id="4113"/>
</organismHost>
<proteinExistence type="inferred from homology"/>